<organism>
    <name type="scientific">Mycobacterium sp. (strain JLS)</name>
    <dbReference type="NCBI Taxonomy" id="164757"/>
    <lineage>
        <taxon>Bacteria</taxon>
        <taxon>Bacillati</taxon>
        <taxon>Actinomycetota</taxon>
        <taxon>Actinomycetes</taxon>
        <taxon>Mycobacteriales</taxon>
        <taxon>Mycobacteriaceae</taxon>
        <taxon>Mycobacterium</taxon>
    </lineage>
</organism>
<evidence type="ECO:0000255" key="1">
    <source>
        <dbReference type="HAMAP-Rule" id="MF_00123"/>
    </source>
</evidence>
<feature type="chain" id="PRO_1000018069" description="Arginine--tRNA ligase">
    <location>
        <begin position="1"/>
        <end position="550"/>
    </location>
</feature>
<feature type="short sequence motif" description="'HIGH' region">
    <location>
        <begin position="130"/>
        <end position="140"/>
    </location>
</feature>
<accession>A3Q3D3</accession>
<proteinExistence type="inferred from homology"/>
<reference key="1">
    <citation type="submission" date="2007-02" db="EMBL/GenBank/DDBJ databases">
        <title>Complete sequence of Mycobacterium sp. JLS.</title>
        <authorList>
            <consortium name="US DOE Joint Genome Institute"/>
            <person name="Copeland A."/>
            <person name="Lucas S."/>
            <person name="Lapidus A."/>
            <person name="Barry K."/>
            <person name="Detter J.C."/>
            <person name="Glavina del Rio T."/>
            <person name="Hammon N."/>
            <person name="Israni S."/>
            <person name="Dalin E."/>
            <person name="Tice H."/>
            <person name="Pitluck S."/>
            <person name="Chain P."/>
            <person name="Malfatti S."/>
            <person name="Shin M."/>
            <person name="Vergez L."/>
            <person name="Schmutz J."/>
            <person name="Larimer F."/>
            <person name="Land M."/>
            <person name="Hauser L."/>
            <person name="Kyrpides N."/>
            <person name="Mikhailova N."/>
            <person name="Miller C.D."/>
            <person name="Anderson A.J."/>
            <person name="Sims R.C."/>
            <person name="Richardson P."/>
        </authorList>
    </citation>
    <scope>NUCLEOTIDE SEQUENCE [LARGE SCALE GENOMIC DNA]</scope>
    <source>
        <strain>JLS</strain>
    </source>
</reference>
<sequence length="550" mass="59210">MTPADLADLLRTTATAVLTERDLDTAALPATVTVERPRNPEHGDYATNLALQVGKKVGVNPRELAGWLAEALTAAAGIASAEVAGPGFVNLRIEAAAQNVIVGDIITSAERYGHSAALAERNINLEFVSANPTGPIHIGGTRWAAVGDALGRLLATQGAAVVREYYFNDHGAQIDRFVSSLIAAAKGEPTPEDGYAGSYIGDIAAQVLAKDPGALELPDGEMRETFRAIGVDLMFDHIKISLHDFGTDFDVFTHEDSMHTSGRVEEAIARLRENGAIYEKDGATWLRTTDFGDDKDRVVIKSDGAPAYIAGDLAYFLDKRQRGFDLCIYMLGADHHGYIARLKAAAAALGDDPDTVEVMIGQMVNLVRDGQPVRMSKRAGTVITLDDLVEAIGVDAARYSLIRSSVDTPIDIDLALWSSASNENPVYYVQYAHARLSALARNAADLGVVADTARLDLLTHDKEGTLIRNLGEFPRVLESAAALREPHRVCRYLEDLAGDYHRFYDSCRVLPQGDEAPGSLHQARLALCQATRQVIANGLAILGVSAPERM</sequence>
<protein>
    <recommendedName>
        <fullName evidence="1">Arginine--tRNA ligase</fullName>
        <ecNumber evidence="1">6.1.1.19</ecNumber>
    </recommendedName>
    <alternativeName>
        <fullName evidence="1">Arginyl-tRNA synthetase</fullName>
        <shortName evidence="1">ArgRS</shortName>
    </alternativeName>
</protein>
<gene>
    <name evidence="1" type="primary">argS</name>
    <name type="ordered locus">Mjls_3884</name>
</gene>
<name>SYR_MYCSJ</name>
<keyword id="KW-0030">Aminoacyl-tRNA synthetase</keyword>
<keyword id="KW-0067">ATP-binding</keyword>
<keyword id="KW-0963">Cytoplasm</keyword>
<keyword id="KW-0436">Ligase</keyword>
<keyword id="KW-0547">Nucleotide-binding</keyword>
<keyword id="KW-0648">Protein biosynthesis</keyword>
<comment type="catalytic activity">
    <reaction evidence="1">
        <text>tRNA(Arg) + L-arginine + ATP = L-arginyl-tRNA(Arg) + AMP + diphosphate</text>
        <dbReference type="Rhea" id="RHEA:20301"/>
        <dbReference type="Rhea" id="RHEA-COMP:9658"/>
        <dbReference type="Rhea" id="RHEA-COMP:9673"/>
        <dbReference type="ChEBI" id="CHEBI:30616"/>
        <dbReference type="ChEBI" id="CHEBI:32682"/>
        <dbReference type="ChEBI" id="CHEBI:33019"/>
        <dbReference type="ChEBI" id="CHEBI:78442"/>
        <dbReference type="ChEBI" id="CHEBI:78513"/>
        <dbReference type="ChEBI" id="CHEBI:456215"/>
        <dbReference type="EC" id="6.1.1.19"/>
    </reaction>
</comment>
<comment type="subunit">
    <text evidence="1">Monomer.</text>
</comment>
<comment type="subcellular location">
    <subcellularLocation>
        <location evidence="1">Cytoplasm</location>
    </subcellularLocation>
</comment>
<comment type="similarity">
    <text evidence="1">Belongs to the class-I aminoacyl-tRNA synthetase family.</text>
</comment>
<dbReference type="EC" id="6.1.1.19" evidence="1"/>
<dbReference type="EMBL" id="CP000580">
    <property type="protein sequence ID" value="ABN99660.1"/>
    <property type="molecule type" value="Genomic_DNA"/>
</dbReference>
<dbReference type="SMR" id="A3Q3D3"/>
<dbReference type="KEGG" id="mjl:Mjls_3884"/>
<dbReference type="HOGENOM" id="CLU_006406_0_1_11"/>
<dbReference type="BioCyc" id="MSP164757:G1G8C-3924-MONOMER"/>
<dbReference type="GO" id="GO:0005737">
    <property type="term" value="C:cytoplasm"/>
    <property type="evidence" value="ECO:0007669"/>
    <property type="project" value="UniProtKB-SubCell"/>
</dbReference>
<dbReference type="GO" id="GO:0004814">
    <property type="term" value="F:arginine-tRNA ligase activity"/>
    <property type="evidence" value="ECO:0007669"/>
    <property type="project" value="UniProtKB-UniRule"/>
</dbReference>
<dbReference type="GO" id="GO:0005524">
    <property type="term" value="F:ATP binding"/>
    <property type="evidence" value="ECO:0007669"/>
    <property type="project" value="UniProtKB-UniRule"/>
</dbReference>
<dbReference type="GO" id="GO:0006420">
    <property type="term" value="P:arginyl-tRNA aminoacylation"/>
    <property type="evidence" value="ECO:0007669"/>
    <property type="project" value="UniProtKB-UniRule"/>
</dbReference>
<dbReference type="CDD" id="cd07956">
    <property type="entry name" value="Anticodon_Ia_Arg"/>
    <property type="match status" value="1"/>
</dbReference>
<dbReference type="CDD" id="cd00671">
    <property type="entry name" value="ArgRS_core"/>
    <property type="match status" value="1"/>
</dbReference>
<dbReference type="FunFam" id="1.10.730.10:FF:000008">
    <property type="entry name" value="Arginine--tRNA ligase"/>
    <property type="match status" value="1"/>
</dbReference>
<dbReference type="FunFam" id="3.40.50.620:FF:000062">
    <property type="entry name" value="Arginine--tRNA ligase"/>
    <property type="match status" value="1"/>
</dbReference>
<dbReference type="Gene3D" id="3.30.1360.70">
    <property type="entry name" value="Arginyl tRNA synthetase N-terminal domain"/>
    <property type="match status" value="1"/>
</dbReference>
<dbReference type="Gene3D" id="3.40.50.620">
    <property type="entry name" value="HUPs"/>
    <property type="match status" value="1"/>
</dbReference>
<dbReference type="Gene3D" id="1.10.730.10">
    <property type="entry name" value="Isoleucyl-tRNA Synthetase, Domain 1"/>
    <property type="match status" value="1"/>
</dbReference>
<dbReference type="HAMAP" id="MF_00123">
    <property type="entry name" value="Arg_tRNA_synth"/>
    <property type="match status" value="1"/>
</dbReference>
<dbReference type="InterPro" id="IPR001412">
    <property type="entry name" value="aa-tRNA-synth_I_CS"/>
</dbReference>
<dbReference type="InterPro" id="IPR001278">
    <property type="entry name" value="Arg-tRNA-ligase"/>
</dbReference>
<dbReference type="InterPro" id="IPR005148">
    <property type="entry name" value="Arg-tRNA-synth_N"/>
</dbReference>
<dbReference type="InterPro" id="IPR036695">
    <property type="entry name" value="Arg-tRNA-synth_N_sf"/>
</dbReference>
<dbReference type="InterPro" id="IPR035684">
    <property type="entry name" value="ArgRS_core"/>
</dbReference>
<dbReference type="InterPro" id="IPR008909">
    <property type="entry name" value="DALR_anticod-bd"/>
</dbReference>
<dbReference type="InterPro" id="IPR014729">
    <property type="entry name" value="Rossmann-like_a/b/a_fold"/>
</dbReference>
<dbReference type="InterPro" id="IPR009080">
    <property type="entry name" value="tRNAsynth_Ia_anticodon-bd"/>
</dbReference>
<dbReference type="NCBIfam" id="TIGR00456">
    <property type="entry name" value="argS"/>
    <property type="match status" value="1"/>
</dbReference>
<dbReference type="PANTHER" id="PTHR11956:SF5">
    <property type="entry name" value="ARGININE--TRNA LIGASE, CYTOPLASMIC"/>
    <property type="match status" value="1"/>
</dbReference>
<dbReference type="PANTHER" id="PTHR11956">
    <property type="entry name" value="ARGINYL-TRNA SYNTHETASE"/>
    <property type="match status" value="1"/>
</dbReference>
<dbReference type="Pfam" id="PF03485">
    <property type="entry name" value="Arg_tRNA_synt_N"/>
    <property type="match status" value="1"/>
</dbReference>
<dbReference type="Pfam" id="PF05746">
    <property type="entry name" value="DALR_1"/>
    <property type="match status" value="1"/>
</dbReference>
<dbReference type="Pfam" id="PF00750">
    <property type="entry name" value="tRNA-synt_1d"/>
    <property type="match status" value="1"/>
</dbReference>
<dbReference type="PRINTS" id="PR01038">
    <property type="entry name" value="TRNASYNTHARG"/>
</dbReference>
<dbReference type="SMART" id="SM01016">
    <property type="entry name" value="Arg_tRNA_synt_N"/>
    <property type="match status" value="1"/>
</dbReference>
<dbReference type="SMART" id="SM00836">
    <property type="entry name" value="DALR_1"/>
    <property type="match status" value="1"/>
</dbReference>
<dbReference type="SUPFAM" id="SSF47323">
    <property type="entry name" value="Anticodon-binding domain of a subclass of class I aminoacyl-tRNA synthetases"/>
    <property type="match status" value="1"/>
</dbReference>
<dbReference type="SUPFAM" id="SSF55190">
    <property type="entry name" value="Arginyl-tRNA synthetase (ArgRS), N-terminal 'additional' domain"/>
    <property type="match status" value="1"/>
</dbReference>
<dbReference type="SUPFAM" id="SSF52374">
    <property type="entry name" value="Nucleotidylyl transferase"/>
    <property type="match status" value="1"/>
</dbReference>
<dbReference type="PROSITE" id="PS00178">
    <property type="entry name" value="AA_TRNA_LIGASE_I"/>
    <property type="match status" value="1"/>
</dbReference>